<reference key="1">
    <citation type="journal article" date="1998" name="Science">
        <title>Genome sequence of the nematode C. elegans: a platform for investigating biology.</title>
        <authorList>
            <consortium name="The C. elegans sequencing consortium"/>
        </authorList>
    </citation>
    <scope>NUCLEOTIDE SEQUENCE [LARGE SCALE GENOMIC DNA]</scope>
    <scope>ALTERNATIVE SPLICING</scope>
    <source>
        <strain>Bristol N2</strain>
    </source>
</reference>
<reference key="2">
    <citation type="journal article" date="2003" name="Eur. J. Biochem.">
        <title>The astacin protein family in Caenorhabditis elegans.</title>
        <authorList>
            <person name="Moehrlen F."/>
            <person name="Hutter H."/>
            <person name="Zwilling R."/>
        </authorList>
    </citation>
    <scope>NOMENCLATURE</scope>
    <scope>DISRUPTION PHENOTYPE</scope>
</reference>
<reference key="3">
    <citation type="journal article" date="2010" name="BMC Dev. Biol.">
        <title>Characterization of the astacin family of metalloproteases in C. elegans.</title>
        <authorList>
            <person name="Park J.O."/>
            <person name="Pan J."/>
            <person name="Moehrlen F."/>
            <person name="Schupp M.O."/>
            <person name="Johnsen R."/>
            <person name="Baillie D.L."/>
            <person name="Zapf R."/>
            <person name="Moerman D.G."/>
            <person name="Hutter H."/>
        </authorList>
    </citation>
    <scope>TISSUE SPECIFICITY</scope>
</reference>
<protein>
    <recommendedName>
        <fullName>Zinc metalloproteinase nas-9</fullName>
        <ecNumber evidence="1">3.4.24.-</ecNumber>
    </recommendedName>
    <alternativeName>
        <fullName>Nematode astacin 9</fullName>
    </alternativeName>
</protein>
<name>NAS9_CAEEL</name>
<evidence type="ECO:0000250" key="1">
    <source>
        <dbReference type="UniProtKB" id="A8Q2D1"/>
    </source>
</evidence>
<evidence type="ECO:0000250" key="2">
    <source>
        <dbReference type="UniProtKB" id="P07584"/>
    </source>
</evidence>
<evidence type="ECO:0000250" key="3">
    <source>
        <dbReference type="UniProtKB" id="P13497"/>
    </source>
</evidence>
<evidence type="ECO:0000255" key="4"/>
<evidence type="ECO:0000255" key="5">
    <source>
        <dbReference type="PROSITE-ProRule" id="PRU01005"/>
    </source>
</evidence>
<evidence type="ECO:0000255" key="6">
    <source>
        <dbReference type="PROSITE-ProRule" id="PRU01211"/>
    </source>
</evidence>
<evidence type="ECO:0000269" key="7">
    <source>
    </source>
</evidence>
<evidence type="ECO:0000269" key="8">
    <source>
    </source>
</evidence>
<evidence type="ECO:0000305" key="9"/>
<dbReference type="EC" id="3.4.24.-" evidence="1"/>
<dbReference type="EMBL" id="FO080813">
    <property type="protein sequence ID" value="CCD66988.1"/>
    <property type="molecule type" value="Genomic_DNA"/>
</dbReference>
<dbReference type="EMBL" id="FO080813">
    <property type="protein sequence ID" value="CCD66989.1"/>
    <property type="molecule type" value="Genomic_DNA"/>
</dbReference>
<dbReference type="EMBL" id="FO080813">
    <property type="protein sequence ID" value="CCD66990.1"/>
    <property type="molecule type" value="Genomic_DNA"/>
</dbReference>
<dbReference type="PIR" id="T25615">
    <property type="entry name" value="T25615"/>
</dbReference>
<dbReference type="RefSeq" id="NP_001379790.1">
    <molecule id="P91137-3"/>
    <property type="nucleotide sequence ID" value="NM_001392505.1"/>
</dbReference>
<dbReference type="RefSeq" id="NP_504293.2">
    <property type="nucleotide sequence ID" value="NM_071892.8"/>
</dbReference>
<dbReference type="RefSeq" id="NP_741531.1">
    <molecule id="P91137-2"/>
    <property type="nucleotide sequence ID" value="NM_171452.2"/>
</dbReference>
<dbReference type="RefSeq" id="NP_741532.1">
    <molecule id="P91137-1"/>
    <property type="nucleotide sequence ID" value="NM_171927.3"/>
</dbReference>
<dbReference type="SMR" id="P91137"/>
<dbReference type="BioGRID" id="43925">
    <property type="interactions" value="2"/>
</dbReference>
<dbReference type="FunCoup" id="P91137">
    <property type="interactions" value="265"/>
</dbReference>
<dbReference type="STRING" id="6239.C37H5.9b.1"/>
<dbReference type="MEROPS" id="M12.A22"/>
<dbReference type="GlyCosmos" id="P91137">
    <property type="glycosylation" value="1 site, No reported glycans"/>
</dbReference>
<dbReference type="PaxDb" id="6239-C37H5.9b"/>
<dbReference type="PeptideAtlas" id="P91137"/>
<dbReference type="EnsemblMetazoa" id="C37H5.9a.1">
    <molecule id="P91137-2"/>
    <property type="protein sequence ID" value="C37H5.9a.1"/>
    <property type="gene ID" value="WBGene00003528"/>
</dbReference>
<dbReference type="EnsemblMetazoa" id="C37H5.9b.1">
    <molecule id="P91137-1"/>
    <property type="protein sequence ID" value="C37H5.9b.1"/>
    <property type="gene ID" value="WBGene00003528"/>
</dbReference>
<dbReference type="EnsemblMetazoa" id="C37H5.9c.1">
    <molecule id="P91137-3"/>
    <property type="protein sequence ID" value="C37H5.9c.1"/>
    <property type="gene ID" value="WBGene00003528"/>
</dbReference>
<dbReference type="EnsemblMetazoa" id="C37H5.9c.2">
    <molecule id="P91137-3"/>
    <property type="protein sequence ID" value="C37H5.9c.2"/>
    <property type="gene ID" value="WBGene00003528"/>
</dbReference>
<dbReference type="GeneID" id="178875"/>
<dbReference type="KEGG" id="cel:CELE_C37H5.9"/>
<dbReference type="UCSC" id="C37H5.9c.1">
    <molecule id="P91137-1"/>
    <property type="organism name" value="c. elegans"/>
</dbReference>
<dbReference type="AGR" id="WB:WBGene00003528"/>
<dbReference type="CTD" id="178875"/>
<dbReference type="WormBase" id="C37H5.9a">
    <molecule id="P91137-2"/>
    <property type="protein sequence ID" value="CE08632"/>
    <property type="gene ID" value="WBGene00003528"/>
    <property type="gene designation" value="nas-9"/>
</dbReference>
<dbReference type="WormBase" id="C37H5.9b">
    <molecule id="P91137-1"/>
    <property type="protein sequence ID" value="CE29710"/>
    <property type="gene ID" value="WBGene00003528"/>
    <property type="gene designation" value="nas-9"/>
</dbReference>
<dbReference type="WormBase" id="C37H5.9c">
    <molecule id="P91137-3"/>
    <property type="protein sequence ID" value="CE32825"/>
    <property type="gene ID" value="WBGene00003528"/>
    <property type="gene designation" value="nas-9"/>
</dbReference>
<dbReference type="eggNOG" id="KOG3714">
    <property type="taxonomic scope" value="Eukaryota"/>
</dbReference>
<dbReference type="GeneTree" id="ENSGT00970000196429"/>
<dbReference type="InParanoid" id="P91137"/>
<dbReference type="OMA" id="MHYNAYL"/>
<dbReference type="OrthoDB" id="291007at2759"/>
<dbReference type="PhylomeDB" id="P91137"/>
<dbReference type="PRO" id="PR:P91137"/>
<dbReference type="Proteomes" id="UP000001940">
    <property type="component" value="Chromosome V"/>
</dbReference>
<dbReference type="Bgee" id="WBGene00003528">
    <property type="expression patterns" value="Expressed in larva and 2 other cell types or tissues"/>
</dbReference>
<dbReference type="GO" id="GO:0005576">
    <property type="term" value="C:extracellular region"/>
    <property type="evidence" value="ECO:0007669"/>
    <property type="project" value="UniProtKB-SubCell"/>
</dbReference>
<dbReference type="GO" id="GO:0004222">
    <property type="term" value="F:metalloendopeptidase activity"/>
    <property type="evidence" value="ECO:0000318"/>
    <property type="project" value="GO_Central"/>
</dbReference>
<dbReference type="GO" id="GO:0008270">
    <property type="term" value="F:zinc ion binding"/>
    <property type="evidence" value="ECO:0007669"/>
    <property type="project" value="InterPro"/>
</dbReference>
<dbReference type="GO" id="GO:0006508">
    <property type="term" value="P:proteolysis"/>
    <property type="evidence" value="ECO:0007669"/>
    <property type="project" value="UniProtKB-KW"/>
</dbReference>
<dbReference type="CDD" id="cd04280">
    <property type="entry name" value="ZnMc_astacin_like"/>
    <property type="match status" value="1"/>
</dbReference>
<dbReference type="FunFam" id="3.40.390.10:FF:000050">
    <property type="entry name" value="Metalloendopeptidase"/>
    <property type="match status" value="1"/>
</dbReference>
<dbReference type="Gene3D" id="3.40.390.10">
    <property type="entry name" value="Collagenase (Catalytic Domain)"/>
    <property type="match status" value="1"/>
</dbReference>
<dbReference type="InterPro" id="IPR034035">
    <property type="entry name" value="Astacin-like_dom"/>
</dbReference>
<dbReference type="InterPro" id="IPR024079">
    <property type="entry name" value="MetalloPept_cat_dom_sf"/>
</dbReference>
<dbReference type="InterPro" id="IPR001506">
    <property type="entry name" value="Peptidase_M12A"/>
</dbReference>
<dbReference type="InterPro" id="IPR017368">
    <property type="entry name" value="Peptidase_M12A_astacin-9/10/11"/>
</dbReference>
<dbReference type="InterPro" id="IPR006026">
    <property type="entry name" value="Peptidase_Metallo"/>
</dbReference>
<dbReference type="InterPro" id="IPR003582">
    <property type="entry name" value="ShKT_dom"/>
</dbReference>
<dbReference type="PANTHER" id="PTHR10127">
    <property type="entry name" value="DISCOIDIN, CUB, EGF, LAMININ , AND ZINC METALLOPROTEASE DOMAIN CONTAINING"/>
    <property type="match status" value="1"/>
</dbReference>
<dbReference type="PANTHER" id="PTHR10127:SF815">
    <property type="entry name" value="ZINC METALLOPROTEINASE NAS-9"/>
    <property type="match status" value="1"/>
</dbReference>
<dbReference type="Pfam" id="PF01400">
    <property type="entry name" value="Astacin"/>
    <property type="match status" value="1"/>
</dbReference>
<dbReference type="Pfam" id="PF01549">
    <property type="entry name" value="ShK"/>
    <property type="match status" value="1"/>
</dbReference>
<dbReference type="PIRSF" id="PIRSF038055">
    <property type="entry name" value="Nas9/Nas10/Nas11"/>
    <property type="match status" value="1"/>
</dbReference>
<dbReference type="PRINTS" id="PR00480">
    <property type="entry name" value="ASTACIN"/>
</dbReference>
<dbReference type="SMART" id="SM00235">
    <property type="entry name" value="ZnMc"/>
    <property type="match status" value="1"/>
</dbReference>
<dbReference type="SUPFAM" id="SSF55486">
    <property type="entry name" value="Metalloproteases ('zincins'), catalytic domain"/>
    <property type="match status" value="1"/>
</dbReference>
<dbReference type="PROSITE" id="PS51864">
    <property type="entry name" value="ASTACIN"/>
    <property type="match status" value="1"/>
</dbReference>
<dbReference type="PROSITE" id="PS51670">
    <property type="entry name" value="SHKT"/>
    <property type="match status" value="1"/>
</dbReference>
<accession>P91137</accession>
<accession>Q8I7H6</accession>
<accession>Q95Q69</accession>
<comment type="function">
    <text evidence="2">Metalloprotease.</text>
</comment>
<comment type="cofactor">
    <cofactor evidence="6">
        <name>Zn(2+)</name>
        <dbReference type="ChEBI" id="CHEBI:29105"/>
    </cofactor>
    <text evidence="6">Binds 1 zinc ion per subunit.</text>
</comment>
<comment type="subcellular location">
    <subcellularLocation>
        <location evidence="9">Secreted</location>
    </subcellularLocation>
</comment>
<comment type="alternative products">
    <event type="alternative splicing"/>
    <isoform>
        <id>P91137-1</id>
        <name>b</name>
        <sequence type="displayed"/>
    </isoform>
    <isoform>
        <id>P91137-2</id>
        <name>a</name>
        <sequence type="described" ref="VSP_012353"/>
    </isoform>
    <isoform>
        <id>P91137-3</id>
        <name>c</name>
        <sequence type="described" ref="VSP_012352"/>
    </isoform>
</comment>
<comment type="tissue specificity">
    <text evidence="8">Expressed in hypodermis, uterus and spermatheca.</text>
</comment>
<comment type="disruption phenotype">
    <text evidence="7">Defects lead to embryonic lethality in 6% of population.</text>
</comment>
<feature type="signal peptide" evidence="4">
    <location>
        <begin position="1"/>
        <end position="14"/>
    </location>
</feature>
<feature type="propeptide" id="PRO_0000442656" evidence="3">
    <location>
        <begin position="15"/>
        <end position="300"/>
    </location>
</feature>
<feature type="chain" id="PRO_0000028914" description="Zinc metalloproteinase nas-9">
    <location>
        <begin position="301"/>
        <end position="546"/>
    </location>
</feature>
<feature type="domain" description="Peptidase M12A" evidence="6">
    <location>
        <begin position="308"/>
        <end position="507"/>
    </location>
</feature>
<feature type="domain" description="ShKT" evidence="5">
    <location>
        <begin position="510"/>
        <end position="546"/>
    </location>
</feature>
<feature type="active site" evidence="6">
    <location>
        <position position="402"/>
    </location>
</feature>
<feature type="binding site" evidence="6">
    <location>
        <position position="401"/>
    </location>
    <ligand>
        <name>Zn(2+)</name>
        <dbReference type="ChEBI" id="CHEBI:29105"/>
        <note>catalytic</note>
    </ligand>
</feature>
<feature type="binding site" evidence="6">
    <location>
        <position position="405"/>
    </location>
    <ligand>
        <name>Zn(2+)</name>
        <dbReference type="ChEBI" id="CHEBI:29105"/>
        <note>catalytic</note>
    </ligand>
</feature>
<feature type="binding site" evidence="6">
    <location>
        <position position="411"/>
    </location>
    <ligand>
        <name>Zn(2+)</name>
        <dbReference type="ChEBI" id="CHEBI:29105"/>
        <note>catalytic</note>
    </ligand>
</feature>
<feature type="glycosylation site" description="N-linked (GlcNAc...) asparagine" evidence="4">
    <location>
        <position position="248"/>
    </location>
</feature>
<feature type="disulfide bond" evidence="6">
    <location>
        <begin position="347"/>
        <end position="506"/>
    </location>
</feature>
<feature type="disulfide bond" evidence="6">
    <location>
        <begin position="372"/>
        <end position="392"/>
    </location>
</feature>
<feature type="disulfide bond" evidence="5">
    <location>
        <begin position="510"/>
        <end position="546"/>
    </location>
</feature>
<feature type="disulfide bond" evidence="5">
    <location>
        <begin position="517"/>
        <end position="539"/>
    </location>
</feature>
<feature type="disulfide bond" evidence="5">
    <location>
        <begin position="526"/>
        <end position="543"/>
    </location>
</feature>
<feature type="splice variant" id="VSP_012352" description="In isoform c." evidence="9">
    <location>
        <begin position="1"/>
        <end position="74"/>
    </location>
</feature>
<feature type="splice variant" id="VSP_012353" description="In isoform a." evidence="9">
    <location>
        <begin position="395"/>
        <end position="423"/>
    </location>
</feature>
<keyword id="KW-0025">Alternative splicing</keyword>
<keyword id="KW-1015">Disulfide bond</keyword>
<keyword id="KW-0325">Glycoprotein</keyword>
<keyword id="KW-0378">Hydrolase</keyword>
<keyword id="KW-0479">Metal-binding</keyword>
<keyword id="KW-0482">Metalloprotease</keyword>
<keyword id="KW-0645">Protease</keyword>
<keyword id="KW-1185">Reference proteome</keyword>
<keyword id="KW-0964">Secreted</keyword>
<keyword id="KW-0732">Signal</keyword>
<keyword id="KW-0862">Zinc</keyword>
<keyword id="KW-0865">Zymogen</keyword>
<gene>
    <name type="primary">nas-9</name>
    <name type="ORF">C37H5.9</name>
</gene>
<organism>
    <name type="scientific">Caenorhabditis elegans</name>
    <dbReference type="NCBI Taxonomy" id="6239"/>
    <lineage>
        <taxon>Eukaryota</taxon>
        <taxon>Metazoa</taxon>
        <taxon>Ecdysozoa</taxon>
        <taxon>Nematoda</taxon>
        <taxon>Chromadorea</taxon>
        <taxon>Rhabditida</taxon>
        <taxon>Rhabditina</taxon>
        <taxon>Rhabditomorpha</taxon>
        <taxon>Rhabditoidea</taxon>
        <taxon>Rhabditidae</taxon>
        <taxon>Peloderinae</taxon>
        <taxon>Caenorhabditis</taxon>
    </lineage>
</organism>
<sequence length="546" mass="60977">MIFLLFVVFPFVYAQLLPELLAGFQNGRFRGGPDGFNRGPGGFHRGPDGFGGDPRGGVDLGHLIGNIAANVGQEMGLNDADVIGDLRGISRGPRPSSMEWGRRARHFCRRYPGHPKCQRGQLPQFTDVPTIINTIIYNAGDLLPRVPTLNIHDPLAGLNSELVGFIKSLQSQFGQLSSQQRNEIHDSCRSFKCDQQSPQNTQAKQELLTKMLAFDQAVGGKAAPAHDKVNLRFDRTQQVKQALLKRANLSHIIVPADNGVFDRDVLLTEHQANFLLNELGEAGRGADVGAGGGGGGRVPRSGVFFQESAVQKWDIWKPIQYTLDDSLEESDKKDIRDALHEISINTCILFRYNATPKGYHLNYMKVDSTTFCGLSYVGRTDPANPIYLSFQCGDNRGVAMHETMHALGVSHQHLRLDRDKYIKIDWSNIDPQHYDTFAISDAKLYTSYGTKYAYDSIMHYNAYLGAKDPNKPTMIPLVNPQENTPKLGQRAKLTRGDIRLLKKMYCRPGCDDQNVHCGTWALHGYCKMKEQMKWMNENCKASCDKC</sequence>
<proteinExistence type="evidence at transcript level"/>